<evidence type="ECO:0000250" key="1">
    <source>
        <dbReference type="UniProtKB" id="Q3KR51"/>
    </source>
</evidence>
<evidence type="ECO:0000250" key="2">
    <source>
        <dbReference type="UniProtKB" id="Q9Y328"/>
    </source>
</evidence>
<evidence type="ECO:0000255" key="3"/>
<evidence type="ECO:0000256" key="4">
    <source>
        <dbReference type="SAM" id="MobiDB-lite"/>
    </source>
</evidence>
<evidence type="ECO:0000269" key="5">
    <source>
    </source>
</evidence>
<evidence type="ECO:0000269" key="6">
    <source>
    </source>
</evidence>
<evidence type="ECO:0000269" key="7">
    <source>
    </source>
</evidence>
<evidence type="ECO:0000305" key="8"/>
<evidence type="ECO:0000312" key="9">
    <source>
        <dbReference type="MGI" id="MGI:1202070"/>
    </source>
</evidence>
<name>NSG2_MOUSE</name>
<gene>
    <name evidence="9" type="primary">Nsg2</name>
</gene>
<reference key="1">
    <citation type="journal article" date="1995" name="J. Biol. Chem.">
        <title>A 19-kDa protein belonging to a new family is expressed in the Golgi apparatus of neural cells.</title>
        <authorList>
            <person name="Saberan-Djoneidi D."/>
            <person name="Marey-Semper I."/>
            <person name="Picart R."/>
            <person name="Studler J.-M."/>
            <person name="Tougard C."/>
            <person name="Glowinski J."/>
            <person name="Levi-Strauss M."/>
        </authorList>
    </citation>
    <scope>NUCLEOTIDE SEQUENCE [MRNA]</scope>
    <scope>SUBCELLULAR LOCATION</scope>
    <source>
        <strain>BALB/cJ</strain>
        <tissue>Brain</tissue>
    </source>
</reference>
<reference key="2">
    <citation type="journal article" date="2005" name="Science">
        <title>The transcriptional landscape of the mammalian genome.</title>
        <authorList>
            <person name="Carninci P."/>
            <person name="Kasukawa T."/>
            <person name="Katayama S."/>
            <person name="Gough J."/>
            <person name="Frith M.C."/>
            <person name="Maeda N."/>
            <person name="Oyama R."/>
            <person name="Ravasi T."/>
            <person name="Lenhard B."/>
            <person name="Wells C."/>
            <person name="Kodzius R."/>
            <person name="Shimokawa K."/>
            <person name="Bajic V.B."/>
            <person name="Brenner S.E."/>
            <person name="Batalov S."/>
            <person name="Forrest A.R."/>
            <person name="Zavolan M."/>
            <person name="Davis M.J."/>
            <person name="Wilming L.G."/>
            <person name="Aidinis V."/>
            <person name="Allen J.E."/>
            <person name="Ambesi-Impiombato A."/>
            <person name="Apweiler R."/>
            <person name="Aturaliya R.N."/>
            <person name="Bailey T.L."/>
            <person name="Bansal M."/>
            <person name="Baxter L."/>
            <person name="Beisel K.W."/>
            <person name="Bersano T."/>
            <person name="Bono H."/>
            <person name="Chalk A.M."/>
            <person name="Chiu K.P."/>
            <person name="Choudhary V."/>
            <person name="Christoffels A."/>
            <person name="Clutterbuck D.R."/>
            <person name="Crowe M.L."/>
            <person name="Dalla E."/>
            <person name="Dalrymple B.P."/>
            <person name="de Bono B."/>
            <person name="Della Gatta G."/>
            <person name="di Bernardo D."/>
            <person name="Down T."/>
            <person name="Engstrom P."/>
            <person name="Fagiolini M."/>
            <person name="Faulkner G."/>
            <person name="Fletcher C.F."/>
            <person name="Fukushima T."/>
            <person name="Furuno M."/>
            <person name="Futaki S."/>
            <person name="Gariboldi M."/>
            <person name="Georgii-Hemming P."/>
            <person name="Gingeras T.R."/>
            <person name="Gojobori T."/>
            <person name="Green R.E."/>
            <person name="Gustincich S."/>
            <person name="Harbers M."/>
            <person name="Hayashi Y."/>
            <person name="Hensch T.K."/>
            <person name="Hirokawa N."/>
            <person name="Hill D."/>
            <person name="Huminiecki L."/>
            <person name="Iacono M."/>
            <person name="Ikeo K."/>
            <person name="Iwama A."/>
            <person name="Ishikawa T."/>
            <person name="Jakt M."/>
            <person name="Kanapin A."/>
            <person name="Katoh M."/>
            <person name="Kawasawa Y."/>
            <person name="Kelso J."/>
            <person name="Kitamura H."/>
            <person name="Kitano H."/>
            <person name="Kollias G."/>
            <person name="Krishnan S.P."/>
            <person name="Kruger A."/>
            <person name="Kummerfeld S.K."/>
            <person name="Kurochkin I.V."/>
            <person name="Lareau L.F."/>
            <person name="Lazarevic D."/>
            <person name="Lipovich L."/>
            <person name="Liu J."/>
            <person name="Liuni S."/>
            <person name="McWilliam S."/>
            <person name="Madan Babu M."/>
            <person name="Madera M."/>
            <person name="Marchionni L."/>
            <person name="Matsuda H."/>
            <person name="Matsuzawa S."/>
            <person name="Miki H."/>
            <person name="Mignone F."/>
            <person name="Miyake S."/>
            <person name="Morris K."/>
            <person name="Mottagui-Tabar S."/>
            <person name="Mulder N."/>
            <person name="Nakano N."/>
            <person name="Nakauchi H."/>
            <person name="Ng P."/>
            <person name="Nilsson R."/>
            <person name="Nishiguchi S."/>
            <person name="Nishikawa S."/>
            <person name="Nori F."/>
            <person name="Ohara O."/>
            <person name="Okazaki Y."/>
            <person name="Orlando V."/>
            <person name="Pang K.C."/>
            <person name="Pavan W.J."/>
            <person name="Pavesi G."/>
            <person name="Pesole G."/>
            <person name="Petrovsky N."/>
            <person name="Piazza S."/>
            <person name="Reed J."/>
            <person name="Reid J.F."/>
            <person name="Ring B.Z."/>
            <person name="Ringwald M."/>
            <person name="Rost B."/>
            <person name="Ruan Y."/>
            <person name="Salzberg S.L."/>
            <person name="Sandelin A."/>
            <person name="Schneider C."/>
            <person name="Schoenbach C."/>
            <person name="Sekiguchi K."/>
            <person name="Semple C.A."/>
            <person name="Seno S."/>
            <person name="Sessa L."/>
            <person name="Sheng Y."/>
            <person name="Shibata Y."/>
            <person name="Shimada H."/>
            <person name="Shimada K."/>
            <person name="Silva D."/>
            <person name="Sinclair B."/>
            <person name="Sperling S."/>
            <person name="Stupka E."/>
            <person name="Sugiura K."/>
            <person name="Sultana R."/>
            <person name="Takenaka Y."/>
            <person name="Taki K."/>
            <person name="Tammoja K."/>
            <person name="Tan S.L."/>
            <person name="Tang S."/>
            <person name="Taylor M.S."/>
            <person name="Tegner J."/>
            <person name="Teichmann S.A."/>
            <person name="Ueda H.R."/>
            <person name="van Nimwegen E."/>
            <person name="Verardo R."/>
            <person name="Wei C.L."/>
            <person name="Yagi K."/>
            <person name="Yamanishi H."/>
            <person name="Zabarovsky E."/>
            <person name="Zhu S."/>
            <person name="Zimmer A."/>
            <person name="Hide W."/>
            <person name="Bult C."/>
            <person name="Grimmond S.M."/>
            <person name="Teasdale R.D."/>
            <person name="Liu E.T."/>
            <person name="Brusic V."/>
            <person name="Quackenbush J."/>
            <person name="Wahlestedt C."/>
            <person name="Mattick J.S."/>
            <person name="Hume D.A."/>
            <person name="Kai C."/>
            <person name="Sasaki D."/>
            <person name="Tomaru Y."/>
            <person name="Fukuda S."/>
            <person name="Kanamori-Katayama M."/>
            <person name="Suzuki M."/>
            <person name="Aoki J."/>
            <person name="Arakawa T."/>
            <person name="Iida J."/>
            <person name="Imamura K."/>
            <person name="Itoh M."/>
            <person name="Kato T."/>
            <person name="Kawaji H."/>
            <person name="Kawagashira N."/>
            <person name="Kawashima T."/>
            <person name="Kojima M."/>
            <person name="Kondo S."/>
            <person name="Konno H."/>
            <person name="Nakano K."/>
            <person name="Ninomiya N."/>
            <person name="Nishio T."/>
            <person name="Okada M."/>
            <person name="Plessy C."/>
            <person name="Shibata K."/>
            <person name="Shiraki T."/>
            <person name="Suzuki S."/>
            <person name="Tagami M."/>
            <person name="Waki K."/>
            <person name="Watahiki A."/>
            <person name="Okamura-Oho Y."/>
            <person name="Suzuki H."/>
            <person name="Kawai J."/>
            <person name="Hayashizaki Y."/>
        </authorList>
    </citation>
    <scope>NUCLEOTIDE SEQUENCE [LARGE SCALE MRNA]</scope>
    <source>
        <strain>C57BL/6J</strain>
    </source>
</reference>
<reference key="3">
    <citation type="journal article" date="2004" name="Genome Res.">
        <title>The status, quality, and expansion of the NIH full-length cDNA project: the Mammalian Gene Collection (MGC).</title>
        <authorList>
            <consortium name="The MGC Project Team"/>
        </authorList>
    </citation>
    <scope>NUCLEOTIDE SEQUENCE [LARGE SCALE MRNA]</scope>
    <source>
        <tissue>Eye</tissue>
    </source>
</reference>
<reference key="4">
    <citation type="journal article" date="2010" name="Cell">
        <title>A tissue-specific atlas of mouse protein phosphorylation and expression.</title>
        <authorList>
            <person name="Huttlin E.L."/>
            <person name="Jedrychowski M.P."/>
            <person name="Elias J.E."/>
            <person name="Goswami T."/>
            <person name="Rad R."/>
            <person name="Beausoleil S.A."/>
            <person name="Villen J."/>
            <person name="Haas W."/>
            <person name="Sowa M.E."/>
            <person name="Gygi S.P."/>
        </authorList>
    </citation>
    <scope>IDENTIFICATION BY MASS SPECTROMETRY [LARGE SCALE ANALYSIS]</scope>
    <source>
        <tissue>Brain</tissue>
    </source>
</reference>
<reference key="5">
    <citation type="journal article" date="2017" name="J. Comp. Neurol.">
        <title>The related neuronal endosomal proteins NEEP21 (Nsg1) and P19 (Nsg2) have divergent expression profiles in vivo.</title>
        <authorList>
            <person name="Barford K."/>
            <person name="Yap C.C."/>
            <person name="Dwyer N.D."/>
            <person name="Winckler B."/>
        </authorList>
    </citation>
    <scope>DEVELOPMENTAL STAGE</scope>
    <scope>TISSUE SPECIFICITY</scope>
</reference>
<reference key="6">
    <citation type="journal article" date="2017" name="Sci. Rep.">
        <title>The endosomal neuronal proteins Nsg1/NEEP21 and Nsg2/P19 are itinerant, not resident proteins of dendritic endosomes.</title>
        <authorList>
            <person name="Yap C.C."/>
            <person name="Digilio L."/>
            <person name="McMahon L."/>
            <person name="Winckler B."/>
        </authorList>
    </citation>
    <scope>SUBCELLULAR LOCATION</scope>
</reference>
<proteinExistence type="evidence at protein level"/>
<protein>
    <recommendedName>
        <fullName evidence="2">Neuronal vesicle trafficking-associated protein 2</fullName>
    </recommendedName>
    <alternativeName>
        <fullName evidence="2">Neuron-specific protein family member 2</fullName>
    </alternativeName>
    <alternativeName>
        <fullName>Protein 8.5</fullName>
    </alternativeName>
    <alternativeName>
        <fullName>Protein p19</fullName>
    </alternativeName>
</protein>
<organism>
    <name type="scientific">Mus musculus</name>
    <name type="common">Mouse</name>
    <dbReference type="NCBI Taxonomy" id="10090"/>
    <lineage>
        <taxon>Eukaryota</taxon>
        <taxon>Metazoa</taxon>
        <taxon>Chordata</taxon>
        <taxon>Craniata</taxon>
        <taxon>Vertebrata</taxon>
        <taxon>Euteleostomi</taxon>
        <taxon>Mammalia</taxon>
        <taxon>Eutheria</taxon>
        <taxon>Euarchontoglires</taxon>
        <taxon>Glires</taxon>
        <taxon>Rodentia</taxon>
        <taxon>Myomorpha</taxon>
        <taxon>Muroidea</taxon>
        <taxon>Muridae</taxon>
        <taxon>Murinae</taxon>
        <taxon>Mus</taxon>
        <taxon>Mus</taxon>
    </lineage>
</organism>
<feature type="chain" id="PRO_0000164367" description="Neuronal vesicle trafficking-associated protein 2">
    <location>
        <begin position="1"/>
        <end position="171"/>
    </location>
</feature>
<feature type="topological domain" description="Cytoplasmic" evidence="3">
    <location>
        <begin position="1"/>
        <end position="71"/>
    </location>
</feature>
<feature type="transmembrane region" description="Helical; Signal-anchor for type II membrane protein" evidence="3">
    <location>
        <begin position="72"/>
        <end position="92"/>
    </location>
</feature>
<feature type="topological domain" description="Lumenal" evidence="3">
    <location>
        <begin position="93"/>
        <end position="171"/>
    </location>
</feature>
<feature type="region of interest" description="Disordered" evidence="4">
    <location>
        <begin position="1"/>
        <end position="21"/>
    </location>
</feature>
<keyword id="KW-0966">Cell projection</keyword>
<keyword id="KW-0968">Cytoplasmic vesicle</keyword>
<keyword id="KW-0967">Endosome</keyword>
<keyword id="KW-0333">Golgi apparatus</keyword>
<keyword id="KW-0458">Lysosome</keyword>
<keyword id="KW-0472">Membrane</keyword>
<keyword id="KW-1185">Reference proteome</keyword>
<keyword id="KW-0735">Signal-anchor</keyword>
<keyword id="KW-0812">Transmembrane</keyword>
<keyword id="KW-1133">Transmembrane helix</keyword>
<sequence>MVKLNSNPGEKGAKPPSVEDGFQTVPLITPLEVNHLQLAAPEKVIVKTRTEYQPEQRNKGKFRVPKIAEFTVTILVSLALAFLACIVFLVVYKAFTYDHSCPEGFVYKHKRCIPASLDAYYSSQDPSSRSRFYTVISHYSVAKQSTARAIGPWLSAAAVIHEPKPPKTQGH</sequence>
<comment type="subcellular location">
    <subcellularLocation>
        <location evidence="1">Membrane</location>
        <topology evidence="1">Single-pass type II membrane protein</topology>
    </subcellularLocation>
    <subcellularLocation>
        <location evidence="1">Golgi apparatus</location>
        <location evidence="1">trans-Golgi network membrane</location>
    </subcellularLocation>
    <subcellularLocation>
        <location evidence="1">Cell projection</location>
        <location evidence="1">Dendrite</location>
    </subcellularLocation>
    <subcellularLocation>
        <location evidence="1">Endosome membrane</location>
    </subcellularLocation>
    <subcellularLocation>
        <location evidence="1">Early endosome membrane</location>
    </subcellularLocation>
    <subcellularLocation>
        <location evidence="1">Late endosome membrane</location>
    </subcellularLocation>
    <subcellularLocation>
        <location evidence="1">Lysosome lumen</location>
    </subcellularLocation>
    <subcellularLocation>
        <location evidence="7">Cytoplasmic vesicle membrane</location>
    </subcellularLocation>
    <subcellularLocation>
        <location evidence="7">Golgi apparatus</location>
        <location evidence="7">Golgi stack membrane</location>
    </subcellularLocation>
    <subcellularLocation>
        <location evidence="7">Endosome</location>
        <location evidence="7">Multivesicular body membrane</location>
    </subcellularLocation>
    <text evidence="1 6 7">Endocytosed from the cell surface, thus entered into early endosomes, trafficks to late endosomes and degradates in lysosomes (By similarity). Mainly Golgi stack, but also found in small vacuolar organelles and multivesicular bodies (PubMed:7829526). Found in both stationary and motile endosomes (PubMed:28874679).</text>
</comment>
<comment type="tissue specificity">
    <text evidence="5">Specifically expressed in neural and neuroendocrine tissues. Pituitary and less in adrenal gland and testis. Expressed in the hippocampus throughout development. Remains enriched in layer V cortical neurons during development. At P0, broadly expressed in the neocortex. Is down-regulated overall at P8 and P14, but remains relatively enriched in layer V. At P0 is lower expressed in the cerebellum. Expression remains low throughout development, and is undetectable by adulthood (PubMed:28299779).</text>
</comment>
<comment type="developmental stage">
    <text evidence="5">Highly expressed at 20 dpc. At 17.5 dpc, highly expressed in the cortical plate and basal subventricular zone.</text>
</comment>
<comment type="similarity">
    <text evidence="8">Belongs to the NSG family.</text>
</comment>
<accession>P47759</accession>
<dbReference type="EMBL" id="U17259">
    <property type="protein sequence ID" value="AAA67764.1"/>
    <property type="molecule type" value="mRNA"/>
</dbReference>
<dbReference type="EMBL" id="AK011563">
    <property type="protein sequence ID" value="BAB27700.1"/>
    <property type="molecule type" value="mRNA"/>
</dbReference>
<dbReference type="EMBL" id="AK075612">
    <property type="protein sequence ID" value="BAC35857.1"/>
    <property type="molecule type" value="mRNA"/>
</dbReference>
<dbReference type="EMBL" id="BC018224">
    <property type="protein sequence ID" value="AAH18224.1"/>
    <property type="molecule type" value="mRNA"/>
</dbReference>
<dbReference type="CCDS" id="CCDS24516.1"/>
<dbReference type="PIR" id="A55629">
    <property type="entry name" value="A55629"/>
</dbReference>
<dbReference type="RefSeq" id="NP_001277609.1">
    <property type="nucleotide sequence ID" value="NM_001290680.1"/>
</dbReference>
<dbReference type="RefSeq" id="NP_001277610.1">
    <property type="nucleotide sequence ID" value="NM_001290681.1"/>
</dbReference>
<dbReference type="RefSeq" id="NP_032767.1">
    <property type="nucleotide sequence ID" value="NM_008741.4"/>
</dbReference>
<dbReference type="RefSeq" id="XP_030101507.1">
    <property type="nucleotide sequence ID" value="XM_030245647.2"/>
</dbReference>
<dbReference type="SMR" id="P47759"/>
<dbReference type="BioGRID" id="201859">
    <property type="interactions" value="1"/>
</dbReference>
<dbReference type="FunCoup" id="P47759">
    <property type="interactions" value="844"/>
</dbReference>
<dbReference type="STRING" id="10090.ENSMUSP00000020537"/>
<dbReference type="iPTMnet" id="P47759"/>
<dbReference type="PhosphoSitePlus" id="P47759"/>
<dbReference type="PaxDb" id="10090-ENSMUSP00000020537"/>
<dbReference type="PeptideAtlas" id="P47759"/>
<dbReference type="ProteomicsDB" id="293751"/>
<dbReference type="Antibodypedia" id="45952">
    <property type="antibodies" value="78 antibodies from 19 providers"/>
</dbReference>
<dbReference type="DNASU" id="18197"/>
<dbReference type="Ensembl" id="ENSMUST00000020537.9">
    <property type="protein sequence ID" value="ENSMUSP00000020537.3"/>
    <property type="gene ID" value="ENSMUSG00000020297.11"/>
</dbReference>
<dbReference type="GeneID" id="18197"/>
<dbReference type="KEGG" id="mmu:18197"/>
<dbReference type="UCSC" id="uc007iiw.2">
    <property type="organism name" value="mouse"/>
</dbReference>
<dbReference type="AGR" id="MGI:1202070"/>
<dbReference type="CTD" id="51617"/>
<dbReference type="MGI" id="MGI:1202070">
    <property type="gene designation" value="Nsg2"/>
</dbReference>
<dbReference type="VEuPathDB" id="HostDB:ENSMUSG00000020297"/>
<dbReference type="eggNOG" id="ENOG502QRFC">
    <property type="taxonomic scope" value="Eukaryota"/>
</dbReference>
<dbReference type="GeneTree" id="ENSGT00390000000483"/>
<dbReference type="HOGENOM" id="CLU_112085_1_0_1"/>
<dbReference type="InParanoid" id="P47759"/>
<dbReference type="OMA" id="LWREDSW"/>
<dbReference type="OrthoDB" id="8924576at2759"/>
<dbReference type="PhylomeDB" id="P47759"/>
<dbReference type="TreeFam" id="TF332232"/>
<dbReference type="BioGRID-ORCS" id="18197">
    <property type="hits" value="3 hits in 76 CRISPR screens"/>
</dbReference>
<dbReference type="ChiTaRS" id="Nsg2">
    <property type="organism name" value="mouse"/>
</dbReference>
<dbReference type="PRO" id="PR:P47759"/>
<dbReference type="Proteomes" id="UP000000589">
    <property type="component" value="Chromosome 11"/>
</dbReference>
<dbReference type="RNAct" id="P47759">
    <property type="molecule type" value="protein"/>
</dbReference>
<dbReference type="Bgee" id="ENSMUSG00000020297">
    <property type="expression patterns" value="Expressed in cortical plate and 177 other cell types or tissues"/>
</dbReference>
<dbReference type="ExpressionAtlas" id="P47759">
    <property type="expression patterns" value="baseline and differential"/>
</dbReference>
<dbReference type="GO" id="GO:0030659">
    <property type="term" value="C:cytoplasmic vesicle membrane"/>
    <property type="evidence" value="ECO:0000314"/>
    <property type="project" value="UniProtKB"/>
</dbReference>
<dbReference type="GO" id="GO:0030425">
    <property type="term" value="C:dendrite"/>
    <property type="evidence" value="ECO:0000250"/>
    <property type="project" value="UniProtKB"/>
</dbReference>
<dbReference type="GO" id="GO:0005769">
    <property type="term" value="C:early endosome"/>
    <property type="evidence" value="ECO:0000250"/>
    <property type="project" value="UniProtKB"/>
</dbReference>
<dbReference type="GO" id="GO:0031901">
    <property type="term" value="C:early endosome membrane"/>
    <property type="evidence" value="ECO:0007669"/>
    <property type="project" value="UniProtKB-SubCell"/>
</dbReference>
<dbReference type="GO" id="GO:0005768">
    <property type="term" value="C:endosome"/>
    <property type="evidence" value="ECO:0000250"/>
    <property type="project" value="UniProtKB"/>
</dbReference>
<dbReference type="GO" id="GO:0098978">
    <property type="term" value="C:glutamatergic synapse"/>
    <property type="evidence" value="ECO:0000314"/>
    <property type="project" value="SynGO"/>
</dbReference>
<dbReference type="GO" id="GO:1990674">
    <property type="term" value="C:Golgi cis cisterna membrane"/>
    <property type="evidence" value="ECO:0000314"/>
    <property type="project" value="UniProtKB"/>
</dbReference>
<dbReference type="GO" id="GO:0005770">
    <property type="term" value="C:late endosome"/>
    <property type="evidence" value="ECO:0000250"/>
    <property type="project" value="UniProtKB"/>
</dbReference>
<dbReference type="GO" id="GO:0043202">
    <property type="term" value="C:lysosomal lumen"/>
    <property type="evidence" value="ECO:0007669"/>
    <property type="project" value="UniProtKB-SubCell"/>
</dbReference>
<dbReference type="GO" id="GO:0032585">
    <property type="term" value="C:multivesicular body membrane"/>
    <property type="evidence" value="ECO:0000314"/>
    <property type="project" value="UniProtKB"/>
</dbReference>
<dbReference type="GO" id="GO:0098839">
    <property type="term" value="C:postsynaptic density membrane"/>
    <property type="evidence" value="ECO:0000314"/>
    <property type="project" value="SynGO"/>
</dbReference>
<dbReference type="GO" id="GO:0032588">
    <property type="term" value="C:trans-Golgi network membrane"/>
    <property type="evidence" value="ECO:0000250"/>
    <property type="project" value="UniProtKB"/>
</dbReference>
<dbReference type="GO" id="GO:0032051">
    <property type="term" value="F:clathrin light chain binding"/>
    <property type="evidence" value="ECO:0007669"/>
    <property type="project" value="InterPro"/>
</dbReference>
<dbReference type="GO" id="GO:0048268">
    <property type="term" value="P:clathrin coat assembly"/>
    <property type="evidence" value="ECO:0007669"/>
    <property type="project" value="InterPro"/>
</dbReference>
<dbReference type="GO" id="GO:0099072">
    <property type="term" value="P:regulation of postsynaptic membrane neurotransmitter receptor levels"/>
    <property type="evidence" value="ECO:0000314"/>
    <property type="project" value="SynGO"/>
</dbReference>
<dbReference type="InterPro" id="IPR009431">
    <property type="entry name" value="NSG"/>
</dbReference>
<dbReference type="PANTHER" id="PTHR28546:SF2">
    <property type="entry name" value="NEURONAL VESICLE TRAFFICKING-ASSOCIATED PROTEIN 2"/>
    <property type="match status" value="1"/>
</dbReference>
<dbReference type="PANTHER" id="PTHR28546">
    <property type="entry name" value="NEURONAL VESICLE TRAFFICKING-ASSOCIATED PROTEIN 2-RELATED"/>
    <property type="match status" value="1"/>
</dbReference>
<dbReference type="Pfam" id="PF06387">
    <property type="entry name" value="Calcyon"/>
    <property type="match status" value="1"/>
</dbReference>
<dbReference type="PIRSF" id="PIRSF002383">
    <property type="entry name" value="Calcyon"/>
    <property type="match status" value="1"/>
</dbReference>